<sequence>MNNKIALYCRSGFEKECAAEITTKAAQLEIFGFARVKENSGYVLFECYQLEDADRLIREVPFRELIFARQMMVVGELLKDLPPEDRVSPIVGMLTGVVEKAGELRVEVADTNESKELLKFCRKLTVPLRNAMREQKILSARENPHRPVVHVFFIASGCCYVGYSYSNNNSPFYMGIPRLKFPSDAPSRSTLKLEEAFHVFIPADEWEERLASGMHAVDLGACPGGWTYQLVQRSMMVQAIDNGLMAQSLMDTGQVTHHRVDGFKYEPTRSNIYWLVCDMVEKPAKVTQLIIKWLVNGWCREAIFNLKLPMKKRFEVVSENLEMIDEQLKENGINAHIQAKQLYHDREEVTVHVRRIWSGVPGRRDERF</sequence>
<keyword id="KW-0963">Cytoplasm</keyword>
<keyword id="KW-0489">Methyltransferase</keyword>
<keyword id="KW-0698">rRNA processing</keyword>
<keyword id="KW-0949">S-adenosyl-L-methionine</keyword>
<keyword id="KW-0808">Transferase</keyword>
<evidence type="ECO:0000255" key="1">
    <source>
        <dbReference type="HAMAP-Rule" id="MF_01551"/>
    </source>
</evidence>
<comment type="function">
    <text evidence="1">Catalyzes the 2'-O-methylation at nucleotide C2498 in 23S rRNA.</text>
</comment>
<comment type="catalytic activity">
    <reaction evidence="1">
        <text>cytidine(2498) in 23S rRNA + S-adenosyl-L-methionine = 2'-O-methylcytidine(2498) in 23S rRNA + S-adenosyl-L-homocysteine + H(+)</text>
        <dbReference type="Rhea" id="RHEA:42788"/>
        <dbReference type="Rhea" id="RHEA-COMP:10244"/>
        <dbReference type="Rhea" id="RHEA-COMP:10245"/>
        <dbReference type="ChEBI" id="CHEBI:15378"/>
        <dbReference type="ChEBI" id="CHEBI:57856"/>
        <dbReference type="ChEBI" id="CHEBI:59789"/>
        <dbReference type="ChEBI" id="CHEBI:74495"/>
        <dbReference type="ChEBI" id="CHEBI:82748"/>
        <dbReference type="EC" id="2.1.1.186"/>
    </reaction>
</comment>
<comment type="subunit">
    <text evidence="1">Monomer.</text>
</comment>
<comment type="subcellular location">
    <subcellularLocation>
        <location evidence="1">Cytoplasm</location>
    </subcellularLocation>
</comment>
<comment type="similarity">
    <text evidence="1">Belongs to the class I-like SAM-binding methyltransferase superfamily. RNA methyltransferase RlmE family. RlmM subfamily.</text>
</comment>
<reference key="1">
    <citation type="journal article" date="2006" name="PLoS Genet.">
        <title>The complete genome sequence and comparative genome analysis of the high pathogenicity Yersinia enterocolitica strain 8081.</title>
        <authorList>
            <person name="Thomson N.R."/>
            <person name="Howard S."/>
            <person name="Wren B.W."/>
            <person name="Holden M.T.G."/>
            <person name="Crossman L."/>
            <person name="Challis G.L."/>
            <person name="Churcher C."/>
            <person name="Mungall K."/>
            <person name="Brooks K."/>
            <person name="Chillingworth T."/>
            <person name="Feltwell T."/>
            <person name="Abdellah Z."/>
            <person name="Hauser H."/>
            <person name="Jagels K."/>
            <person name="Maddison M."/>
            <person name="Moule S."/>
            <person name="Sanders M."/>
            <person name="Whitehead S."/>
            <person name="Quail M.A."/>
            <person name="Dougan G."/>
            <person name="Parkhill J."/>
            <person name="Prentice M.B."/>
        </authorList>
    </citation>
    <scope>NUCLEOTIDE SEQUENCE [LARGE SCALE GENOMIC DNA]</scope>
    <source>
        <strain>NCTC 13174 / 8081</strain>
    </source>
</reference>
<name>RLMM_YERE8</name>
<protein>
    <recommendedName>
        <fullName evidence="1">Ribosomal RNA large subunit methyltransferase M</fullName>
        <ecNumber evidence="1">2.1.1.186</ecNumber>
    </recommendedName>
    <alternativeName>
        <fullName evidence="1">23S rRNA (cytidine2498-2'-O)-methyltransferase</fullName>
    </alternativeName>
    <alternativeName>
        <fullName evidence="1">23S rRNA 2'-O-ribose methyltransferase RlmM</fullName>
    </alternativeName>
</protein>
<accession>A1JPA5</accession>
<gene>
    <name evidence="1" type="primary">rlmM</name>
    <name type="ordered locus">YE3298</name>
</gene>
<organism>
    <name type="scientific">Yersinia enterocolitica serotype O:8 / biotype 1B (strain NCTC 13174 / 8081)</name>
    <dbReference type="NCBI Taxonomy" id="393305"/>
    <lineage>
        <taxon>Bacteria</taxon>
        <taxon>Pseudomonadati</taxon>
        <taxon>Pseudomonadota</taxon>
        <taxon>Gammaproteobacteria</taxon>
        <taxon>Enterobacterales</taxon>
        <taxon>Yersiniaceae</taxon>
        <taxon>Yersinia</taxon>
    </lineage>
</organism>
<feature type="chain" id="PRO_0000314551" description="Ribosomal RNA large subunit methyltransferase M">
    <location>
        <begin position="1"/>
        <end position="368"/>
    </location>
</feature>
<feature type="active site" description="Proton acceptor" evidence="1">
    <location>
        <position position="307"/>
    </location>
</feature>
<feature type="binding site" evidence="1">
    <location>
        <position position="189"/>
    </location>
    <ligand>
        <name>S-adenosyl-L-methionine</name>
        <dbReference type="ChEBI" id="CHEBI:59789"/>
    </ligand>
</feature>
<feature type="binding site" evidence="1">
    <location>
        <begin position="222"/>
        <end position="225"/>
    </location>
    <ligand>
        <name>S-adenosyl-L-methionine</name>
        <dbReference type="ChEBI" id="CHEBI:59789"/>
    </ligand>
</feature>
<feature type="binding site" evidence="1">
    <location>
        <position position="241"/>
    </location>
    <ligand>
        <name>S-adenosyl-L-methionine</name>
        <dbReference type="ChEBI" id="CHEBI:59789"/>
    </ligand>
</feature>
<feature type="binding site" evidence="1">
    <location>
        <position position="261"/>
    </location>
    <ligand>
        <name>S-adenosyl-L-methionine</name>
        <dbReference type="ChEBI" id="CHEBI:59789"/>
    </ligand>
</feature>
<feature type="binding site" evidence="1">
    <location>
        <position position="278"/>
    </location>
    <ligand>
        <name>S-adenosyl-L-methionine</name>
        <dbReference type="ChEBI" id="CHEBI:59789"/>
    </ligand>
</feature>
<dbReference type="EC" id="2.1.1.186" evidence="1"/>
<dbReference type="EMBL" id="AM286415">
    <property type="protein sequence ID" value="CAL13328.1"/>
    <property type="molecule type" value="Genomic_DNA"/>
</dbReference>
<dbReference type="RefSeq" id="WP_011816972.1">
    <property type="nucleotide sequence ID" value="NC_008800.1"/>
</dbReference>
<dbReference type="RefSeq" id="YP_001007472.1">
    <property type="nucleotide sequence ID" value="NC_008800.1"/>
</dbReference>
<dbReference type="SMR" id="A1JPA5"/>
<dbReference type="KEGG" id="yen:YE3298"/>
<dbReference type="PATRIC" id="fig|393305.7.peg.3508"/>
<dbReference type="eggNOG" id="COG2933">
    <property type="taxonomic scope" value="Bacteria"/>
</dbReference>
<dbReference type="HOGENOM" id="CLU_043780_0_0_6"/>
<dbReference type="OrthoDB" id="154490at2"/>
<dbReference type="Proteomes" id="UP000000642">
    <property type="component" value="Chromosome"/>
</dbReference>
<dbReference type="GO" id="GO:0005737">
    <property type="term" value="C:cytoplasm"/>
    <property type="evidence" value="ECO:0007669"/>
    <property type="project" value="UniProtKB-SubCell"/>
</dbReference>
<dbReference type="GO" id="GO:0008757">
    <property type="term" value="F:S-adenosylmethionine-dependent methyltransferase activity"/>
    <property type="evidence" value="ECO:0007669"/>
    <property type="project" value="UniProtKB-UniRule"/>
</dbReference>
<dbReference type="GO" id="GO:0032259">
    <property type="term" value="P:methylation"/>
    <property type="evidence" value="ECO:0007669"/>
    <property type="project" value="UniProtKB-KW"/>
</dbReference>
<dbReference type="GO" id="GO:0006364">
    <property type="term" value="P:rRNA processing"/>
    <property type="evidence" value="ECO:0007669"/>
    <property type="project" value="UniProtKB-UniRule"/>
</dbReference>
<dbReference type="Gene3D" id="3.30.2300.20">
    <property type="match status" value="1"/>
</dbReference>
<dbReference type="Gene3D" id="3.30.70.2810">
    <property type="match status" value="1"/>
</dbReference>
<dbReference type="Gene3D" id="3.40.50.150">
    <property type="entry name" value="Vaccinia Virus protein VP39"/>
    <property type="match status" value="1"/>
</dbReference>
<dbReference type="HAMAP" id="MF_01551">
    <property type="entry name" value="23SrRNA_methyltr_M"/>
    <property type="match status" value="1"/>
</dbReference>
<dbReference type="InterPro" id="IPR040739">
    <property type="entry name" value="RlmM_FDX"/>
</dbReference>
<dbReference type="InterPro" id="IPR048646">
    <property type="entry name" value="RlmM_THUMP-like"/>
</dbReference>
<dbReference type="InterPro" id="IPR002877">
    <property type="entry name" value="RNA_MeTrfase_FtsJ_dom"/>
</dbReference>
<dbReference type="InterPro" id="IPR011224">
    <property type="entry name" value="rRNA_MeTrfase_M"/>
</dbReference>
<dbReference type="InterPro" id="IPR029063">
    <property type="entry name" value="SAM-dependent_MTases_sf"/>
</dbReference>
<dbReference type="NCBIfam" id="NF008734">
    <property type="entry name" value="PRK11760.1"/>
    <property type="match status" value="1"/>
</dbReference>
<dbReference type="PANTHER" id="PTHR37524">
    <property type="entry name" value="RIBOSOMAL RNA LARGE SUBUNIT METHYLTRANSFERASE M"/>
    <property type="match status" value="1"/>
</dbReference>
<dbReference type="PANTHER" id="PTHR37524:SF2">
    <property type="entry name" value="RIBOSOMAL RNA METHYLTRANSFERASE FTSJ DOMAIN-CONTAINING PROTEIN"/>
    <property type="match status" value="1"/>
</dbReference>
<dbReference type="Pfam" id="PF01728">
    <property type="entry name" value="FtsJ"/>
    <property type="match status" value="1"/>
</dbReference>
<dbReference type="Pfam" id="PF18125">
    <property type="entry name" value="RlmM_FDX"/>
    <property type="match status" value="1"/>
</dbReference>
<dbReference type="Pfam" id="PF21239">
    <property type="entry name" value="RLMM_N"/>
    <property type="match status" value="1"/>
</dbReference>
<dbReference type="PIRSF" id="PIRSF028774">
    <property type="entry name" value="UCP028774"/>
    <property type="match status" value="1"/>
</dbReference>
<dbReference type="SUPFAM" id="SSF53335">
    <property type="entry name" value="S-adenosyl-L-methionine-dependent methyltransferases"/>
    <property type="match status" value="1"/>
</dbReference>
<proteinExistence type="inferred from homology"/>